<dbReference type="EMBL" id="D88777">
    <property type="protein sequence ID" value="BAA13702.1"/>
    <property type="molecule type" value="mRNA"/>
</dbReference>
<dbReference type="PIR" id="JC5431">
    <property type="entry name" value="JC5431"/>
</dbReference>
<dbReference type="SMR" id="P97515"/>
<dbReference type="MEROPS" id="I25.020"/>
<dbReference type="GlyCosmos" id="P97515">
    <property type="glycosylation" value="3 sites, No reported glycans"/>
</dbReference>
<dbReference type="GO" id="GO:0072562">
    <property type="term" value="C:blood microparticle"/>
    <property type="evidence" value="ECO:0007669"/>
    <property type="project" value="TreeGrafter"/>
</dbReference>
<dbReference type="GO" id="GO:0031012">
    <property type="term" value="C:extracellular matrix"/>
    <property type="evidence" value="ECO:0007669"/>
    <property type="project" value="TreeGrafter"/>
</dbReference>
<dbReference type="GO" id="GO:0004869">
    <property type="term" value="F:cysteine-type endopeptidase inhibitor activity"/>
    <property type="evidence" value="ECO:0007669"/>
    <property type="project" value="InterPro"/>
</dbReference>
<dbReference type="CDD" id="cd00042">
    <property type="entry name" value="CY"/>
    <property type="match status" value="2"/>
</dbReference>
<dbReference type="FunFam" id="3.10.450.10:FF:000010">
    <property type="entry name" value="Alpha-2-HS-glycoprotein"/>
    <property type="match status" value="1"/>
</dbReference>
<dbReference type="FunFam" id="3.10.450.10:FF:000009">
    <property type="entry name" value="Alpha-2-HS-glycoprotein 2"/>
    <property type="match status" value="1"/>
</dbReference>
<dbReference type="Gene3D" id="3.10.450.10">
    <property type="match status" value="2"/>
</dbReference>
<dbReference type="InterPro" id="IPR000010">
    <property type="entry name" value="Cystatin_dom"/>
</dbReference>
<dbReference type="InterPro" id="IPR025760">
    <property type="entry name" value="Cystatin_Fetuin_A"/>
</dbReference>
<dbReference type="InterPro" id="IPR046350">
    <property type="entry name" value="Cystatin_sf"/>
</dbReference>
<dbReference type="InterPro" id="IPR050735">
    <property type="entry name" value="Kininogen_Fetuin_HRG"/>
</dbReference>
<dbReference type="InterPro" id="IPR001363">
    <property type="entry name" value="Prot_inh_fetuin_CS"/>
</dbReference>
<dbReference type="PANTHER" id="PTHR13814:SF6">
    <property type="entry name" value="ALPHA-2-HS-GLYCOPROTEIN"/>
    <property type="match status" value="1"/>
</dbReference>
<dbReference type="PANTHER" id="PTHR13814">
    <property type="entry name" value="FETUIN"/>
    <property type="match status" value="1"/>
</dbReference>
<dbReference type="Pfam" id="PF00031">
    <property type="entry name" value="Cystatin"/>
    <property type="match status" value="1"/>
</dbReference>
<dbReference type="SMART" id="SM00043">
    <property type="entry name" value="CY"/>
    <property type="match status" value="2"/>
</dbReference>
<dbReference type="SUPFAM" id="SSF54403">
    <property type="entry name" value="Cystatin/monellin"/>
    <property type="match status" value="2"/>
</dbReference>
<dbReference type="PROSITE" id="PS51529">
    <property type="entry name" value="CYSTATIN_FETUIN_A"/>
    <property type="match status" value="2"/>
</dbReference>
<dbReference type="PROSITE" id="PS01254">
    <property type="entry name" value="FETUIN_1"/>
    <property type="match status" value="1"/>
</dbReference>
<dbReference type="PROSITE" id="PS01255">
    <property type="entry name" value="FETUIN_2"/>
    <property type="match status" value="1"/>
</dbReference>
<sequence length="348" mass="37375">MKTLVLLLCFTLLWGCQSAPQGTGLGFREVACDDPEVEQVALTAVDYLNQHLLQGFKHILNQIDKVKVWSRRPFGEVYELELDTLETTCHALDPTPLANCSVRQLAQHAVEGDCDFHILKQDGQFSVMHTKCHSNPDSAEDVRKVCPHCALLTPFNSSNVVYAVNAALGAFNEKNNKTYFKLVELARAQTVPFPPSTHVEFVIAATDCAAPKVADPAKCNLLAEKQYSFCKASLFQNLGGEEVTVTCTAFPTQANGVTPASPAPAVEKGIPVALPDAPPASLVVGPMVVPAEHLPHKTHHDLRHAFSPVASVESASGEAFQSPTQAGNAGAAGPAVPLCPGRVRHFKI</sequence>
<name>FETUA_MERUN</name>
<accession>P97515</accession>
<organism>
    <name type="scientific">Meriones unguiculatus</name>
    <name type="common">Mongolian jird</name>
    <name type="synonym">Gerbillus unguiculatus</name>
    <dbReference type="NCBI Taxonomy" id="10047"/>
    <lineage>
        <taxon>Eukaryota</taxon>
        <taxon>Metazoa</taxon>
        <taxon>Chordata</taxon>
        <taxon>Craniata</taxon>
        <taxon>Vertebrata</taxon>
        <taxon>Euteleostomi</taxon>
        <taxon>Mammalia</taxon>
        <taxon>Eutheria</taxon>
        <taxon>Euarchontoglires</taxon>
        <taxon>Glires</taxon>
        <taxon>Rodentia</taxon>
        <taxon>Myomorpha</taxon>
        <taxon>Muroidea</taxon>
        <taxon>Muridae</taxon>
        <taxon>Gerbillinae</taxon>
        <taxon>Meriones</taxon>
    </lineage>
</organism>
<feature type="signal peptide" evidence="5">
    <location>
        <begin position="1"/>
        <end position="18"/>
    </location>
</feature>
<feature type="chain" id="PRO_0000008890" description="Alpha-2-HS-glycoprotein">
    <location>
        <begin position="19"/>
        <end position="348"/>
    </location>
</feature>
<feature type="domain" description="Cystatin fetuin-A-type 1" evidence="4">
    <location>
        <begin position="19"/>
        <end position="133"/>
    </location>
</feature>
<feature type="domain" description="Cystatin fetuin-A-type 2" evidence="4">
    <location>
        <begin position="144"/>
        <end position="255"/>
    </location>
</feature>
<feature type="modified residue" description="Phosphoserine" evidence="1">
    <location>
        <position position="134"/>
    </location>
</feature>
<feature type="modified residue" description="Phosphoserine" evidence="1">
    <location>
        <position position="138"/>
    </location>
</feature>
<feature type="modified residue" description="Phosphoserine" evidence="2">
    <location>
        <position position="307"/>
    </location>
</feature>
<feature type="modified residue" description="Phosphoserine" evidence="1">
    <location>
        <position position="311"/>
    </location>
</feature>
<feature type="modified residue" description="Phosphoserine" evidence="1">
    <location>
        <position position="314"/>
    </location>
</feature>
<feature type="modified residue" description="Phosphoserine" evidence="1">
    <location>
        <position position="316"/>
    </location>
</feature>
<feature type="glycosylation site" description="N-linked (GlcNAc...) asparagine" evidence="3">
    <location>
        <position position="99"/>
    </location>
</feature>
<feature type="glycosylation site" description="N-linked (GlcNAc...) asparagine" evidence="3">
    <location>
        <position position="156"/>
    </location>
</feature>
<feature type="glycosylation site" description="N-linked (GlcNAc...) asparagine" evidence="3">
    <location>
        <position position="176"/>
    </location>
</feature>
<feature type="disulfide bond" evidence="4">
    <location>
        <begin position="32"/>
        <end position="339"/>
    </location>
</feature>
<feature type="disulfide bond" evidence="4">
    <location>
        <begin position="89"/>
        <end position="100"/>
    </location>
</feature>
<feature type="disulfide bond" evidence="4">
    <location>
        <begin position="114"/>
        <end position="132"/>
    </location>
</feature>
<feature type="disulfide bond" evidence="4">
    <location>
        <begin position="146"/>
        <end position="149"/>
    </location>
</feature>
<feature type="disulfide bond" evidence="4">
    <location>
        <begin position="208"/>
        <end position="219"/>
    </location>
</feature>
<feature type="disulfide bond" evidence="4">
    <location>
        <begin position="230"/>
        <end position="247"/>
    </location>
</feature>
<evidence type="ECO:0000250" key="1">
    <source>
        <dbReference type="UniProtKB" id="P02765"/>
    </source>
</evidence>
<evidence type="ECO:0000250" key="2">
    <source>
        <dbReference type="UniProtKB" id="P24090"/>
    </source>
</evidence>
<evidence type="ECO:0000255" key="3"/>
<evidence type="ECO:0000255" key="4">
    <source>
        <dbReference type="PROSITE-ProRule" id="PRU00861"/>
    </source>
</evidence>
<evidence type="ECO:0000269" key="5">
    <source>
    </source>
</evidence>
<proteinExistence type="evidence at protein level"/>
<comment type="subcellular location">
    <subcellularLocation>
        <location>Secreted</location>
    </subcellularLocation>
</comment>
<comment type="tissue specificity">
    <text>Expressed by the liver and secreted in plasma.</text>
</comment>
<comment type="PTM">
    <text evidence="1">Phosphorylated by FAM20C in the extracellular medium.</text>
</comment>
<comment type="similarity">
    <text evidence="4">Belongs to the fetuin family.</text>
</comment>
<protein>
    <recommendedName>
        <fullName>Alpha-2-HS-glycoprotein</fullName>
    </recommendedName>
    <alternativeName>
        <fullName>Countertrypin</fullName>
    </alternativeName>
    <alternativeName>
        <fullName>Fetuin-A</fullName>
    </alternativeName>
</protein>
<reference key="1">
    <citation type="journal article" date="1997" name="J. Biochem.">
        <title>Molecular cloning and sequencing of cDNA encoding plasma countertrypin, a member of mammalian fetuin family, from the Mongolian gerbil, Meriones unguiculatus.</title>
        <authorList>
            <person name="Goto K."/>
            <person name="Yoshida K."/>
            <person name="Suzuki Y."/>
            <person name="Yamamoto K."/>
            <person name="Sinohara H."/>
        </authorList>
    </citation>
    <scope>NUCLEOTIDE SEQUENCE [MRNA]</scope>
    <scope>PROTEIN SEQUENCE OF 19-38</scope>
    <source>
        <tissue>Liver</tissue>
    </source>
</reference>
<gene>
    <name type="primary">AHSG</name>
    <name type="synonym">FETUA</name>
</gene>
<keyword id="KW-0903">Direct protein sequencing</keyword>
<keyword id="KW-1015">Disulfide bond</keyword>
<keyword id="KW-0325">Glycoprotein</keyword>
<keyword id="KW-0597">Phosphoprotein</keyword>
<keyword id="KW-0677">Repeat</keyword>
<keyword id="KW-0964">Secreted</keyword>
<keyword id="KW-0732">Signal</keyword>